<name>OTC_BURCJ</name>
<reference key="1">
    <citation type="journal article" date="2009" name="J. Bacteriol.">
        <title>The genome of Burkholderia cenocepacia J2315, an epidemic pathogen of cystic fibrosis patients.</title>
        <authorList>
            <person name="Holden M.T."/>
            <person name="Seth-Smith H.M."/>
            <person name="Crossman L.C."/>
            <person name="Sebaihia M."/>
            <person name="Bentley S.D."/>
            <person name="Cerdeno-Tarraga A.M."/>
            <person name="Thomson N.R."/>
            <person name="Bason N."/>
            <person name="Quail M.A."/>
            <person name="Sharp S."/>
            <person name="Cherevach I."/>
            <person name="Churcher C."/>
            <person name="Goodhead I."/>
            <person name="Hauser H."/>
            <person name="Holroyd N."/>
            <person name="Mungall K."/>
            <person name="Scott P."/>
            <person name="Walker D."/>
            <person name="White B."/>
            <person name="Rose H."/>
            <person name="Iversen P."/>
            <person name="Mil-Homens D."/>
            <person name="Rocha E.P."/>
            <person name="Fialho A.M."/>
            <person name="Baldwin A."/>
            <person name="Dowson C."/>
            <person name="Barrell B.G."/>
            <person name="Govan J.R."/>
            <person name="Vandamme P."/>
            <person name="Hart C.A."/>
            <person name="Mahenthiralingam E."/>
            <person name="Parkhill J."/>
        </authorList>
    </citation>
    <scope>NUCLEOTIDE SEQUENCE [LARGE SCALE GENOMIC DNA]</scope>
    <source>
        <strain>ATCC BAA-245 / DSM 16553 / LMG 16656 / NCTC 13227 / J2315 / CF5610</strain>
    </source>
</reference>
<comment type="function">
    <text evidence="1">Reversibly catalyzes the transfer of the carbamoyl group from carbamoyl phosphate (CP) to the N(epsilon) atom of ornithine (ORN) to produce L-citrulline.</text>
</comment>
<comment type="catalytic activity">
    <reaction evidence="2">
        <text>carbamoyl phosphate + L-ornithine = L-citrulline + phosphate + H(+)</text>
        <dbReference type="Rhea" id="RHEA:19513"/>
        <dbReference type="ChEBI" id="CHEBI:15378"/>
        <dbReference type="ChEBI" id="CHEBI:43474"/>
        <dbReference type="ChEBI" id="CHEBI:46911"/>
        <dbReference type="ChEBI" id="CHEBI:57743"/>
        <dbReference type="ChEBI" id="CHEBI:58228"/>
        <dbReference type="EC" id="2.1.3.3"/>
    </reaction>
</comment>
<comment type="pathway">
    <text evidence="2">Amino-acid degradation; L-arginine degradation via ADI pathway; carbamoyl phosphate from L-arginine: step 2/2.</text>
</comment>
<comment type="subcellular location">
    <subcellularLocation>
        <location evidence="2">Cytoplasm</location>
    </subcellularLocation>
</comment>
<comment type="similarity">
    <text evidence="2">Belongs to the aspartate/ornithine carbamoyltransferase superfamily. OTCase family.</text>
</comment>
<evidence type="ECO:0000250" key="1"/>
<evidence type="ECO:0000255" key="2">
    <source>
        <dbReference type="HAMAP-Rule" id="MF_01109"/>
    </source>
</evidence>
<proteinExistence type="inferred from homology"/>
<keyword id="KW-0056">Arginine metabolism</keyword>
<keyword id="KW-0963">Cytoplasm</keyword>
<keyword id="KW-0808">Transferase</keyword>
<accession>B4E9G6</accession>
<feature type="chain" id="PRO_1000137087" description="Ornithine carbamoyltransferase">
    <location>
        <begin position="1"/>
        <end position="309"/>
    </location>
</feature>
<feature type="binding site" evidence="2">
    <location>
        <begin position="56"/>
        <end position="59"/>
    </location>
    <ligand>
        <name>carbamoyl phosphate</name>
        <dbReference type="ChEBI" id="CHEBI:58228"/>
    </ligand>
</feature>
<feature type="binding site" evidence="2">
    <location>
        <position position="83"/>
    </location>
    <ligand>
        <name>carbamoyl phosphate</name>
        <dbReference type="ChEBI" id="CHEBI:58228"/>
    </ligand>
</feature>
<feature type="binding site" evidence="2">
    <location>
        <position position="107"/>
    </location>
    <ligand>
        <name>carbamoyl phosphate</name>
        <dbReference type="ChEBI" id="CHEBI:58228"/>
    </ligand>
</feature>
<feature type="binding site" evidence="2">
    <location>
        <begin position="134"/>
        <end position="137"/>
    </location>
    <ligand>
        <name>carbamoyl phosphate</name>
        <dbReference type="ChEBI" id="CHEBI:58228"/>
    </ligand>
</feature>
<feature type="binding site" evidence="2">
    <location>
        <position position="165"/>
    </location>
    <ligand>
        <name>L-ornithine</name>
        <dbReference type="ChEBI" id="CHEBI:46911"/>
    </ligand>
</feature>
<feature type="binding site" evidence="2">
    <location>
        <position position="223"/>
    </location>
    <ligand>
        <name>L-ornithine</name>
        <dbReference type="ChEBI" id="CHEBI:46911"/>
    </ligand>
</feature>
<feature type="binding site" evidence="2">
    <location>
        <begin position="227"/>
        <end position="228"/>
    </location>
    <ligand>
        <name>L-ornithine</name>
        <dbReference type="ChEBI" id="CHEBI:46911"/>
    </ligand>
</feature>
<feature type="binding site" evidence="2">
    <location>
        <begin position="263"/>
        <end position="264"/>
    </location>
    <ligand>
        <name>carbamoyl phosphate</name>
        <dbReference type="ChEBI" id="CHEBI:58228"/>
    </ligand>
</feature>
<feature type="binding site" evidence="2">
    <location>
        <position position="291"/>
    </location>
    <ligand>
        <name>carbamoyl phosphate</name>
        <dbReference type="ChEBI" id="CHEBI:58228"/>
    </ligand>
</feature>
<sequence length="309" mass="35240">MTAKTIRHYLQFKDFSLEDYEYVLERTGILKRKFKNYETYHPLHDRTLAMIFEKSSTRTRLSFEAGIFQLGGHAVFMSTRDTQLGRGEPVEDSAQVISRMVDIIMIRTFEQDVITRFAQNSRVPVINGLTNEYHPCQVLADIFTYYEHRGPIAGKTVAWVGDANNMLYTWIEAAQILGFKLRLSTPPGYALDMKLVSPDSAPFYEVFDDPNEACKGADLVTTDVWTSMGFEAENEARKQAFADWCVDEEMMGHANPDALFMHCLPAHRGEEVTAGVIDGPQSVVWDEAENRLHVQKALMEFLLLGRLKH</sequence>
<dbReference type="EC" id="2.1.3.3" evidence="2"/>
<dbReference type="EMBL" id="AM747720">
    <property type="protein sequence ID" value="CAR53067.1"/>
    <property type="molecule type" value="Genomic_DNA"/>
</dbReference>
<dbReference type="SMR" id="B4E9G6"/>
<dbReference type="KEGG" id="bcj:BCAL2767"/>
<dbReference type="eggNOG" id="COG0078">
    <property type="taxonomic scope" value="Bacteria"/>
</dbReference>
<dbReference type="HOGENOM" id="CLU_043846_3_2_4"/>
<dbReference type="BioCyc" id="BCEN216591:G1G1V-3066-MONOMER"/>
<dbReference type="UniPathway" id="UPA00254">
    <property type="reaction ID" value="UER00365"/>
</dbReference>
<dbReference type="Proteomes" id="UP000001035">
    <property type="component" value="Chromosome 1"/>
</dbReference>
<dbReference type="GO" id="GO:0005737">
    <property type="term" value="C:cytoplasm"/>
    <property type="evidence" value="ECO:0007669"/>
    <property type="project" value="UniProtKB-SubCell"/>
</dbReference>
<dbReference type="GO" id="GO:0016597">
    <property type="term" value="F:amino acid binding"/>
    <property type="evidence" value="ECO:0007669"/>
    <property type="project" value="InterPro"/>
</dbReference>
<dbReference type="GO" id="GO:0004585">
    <property type="term" value="F:ornithine carbamoyltransferase activity"/>
    <property type="evidence" value="ECO:0007669"/>
    <property type="project" value="UniProtKB-UniRule"/>
</dbReference>
<dbReference type="GO" id="GO:0042450">
    <property type="term" value="P:arginine biosynthetic process via ornithine"/>
    <property type="evidence" value="ECO:0007669"/>
    <property type="project" value="TreeGrafter"/>
</dbReference>
<dbReference type="GO" id="GO:0019547">
    <property type="term" value="P:arginine catabolic process to ornithine"/>
    <property type="evidence" value="ECO:0007669"/>
    <property type="project" value="UniProtKB-UniRule"/>
</dbReference>
<dbReference type="GO" id="GO:0019240">
    <property type="term" value="P:citrulline biosynthetic process"/>
    <property type="evidence" value="ECO:0007669"/>
    <property type="project" value="TreeGrafter"/>
</dbReference>
<dbReference type="FunFam" id="3.40.50.1370:FF:000008">
    <property type="entry name" value="Ornithine carbamoyltransferase"/>
    <property type="match status" value="1"/>
</dbReference>
<dbReference type="Gene3D" id="3.40.50.1370">
    <property type="entry name" value="Aspartate/ornithine carbamoyltransferase"/>
    <property type="match status" value="2"/>
</dbReference>
<dbReference type="HAMAP" id="MF_01109">
    <property type="entry name" value="OTCase"/>
    <property type="match status" value="1"/>
</dbReference>
<dbReference type="InterPro" id="IPR006132">
    <property type="entry name" value="Asp/Orn_carbamoyltranf_P-bd"/>
</dbReference>
<dbReference type="InterPro" id="IPR006130">
    <property type="entry name" value="Asp/Orn_carbamoylTrfase"/>
</dbReference>
<dbReference type="InterPro" id="IPR036901">
    <property type="entry name" value="Asp/Orn_carbamoylTrfase_sf"/>
</dbReference>
<dbReference type="InterPro" id="IPR006131">
    <property type="entry name" value="Asp_carbamoyltransf_Asp/Orn-bd"/>
</dbReference>
<dbReference type="InterPro" id="IPR002292">
    <property type="entry name" value="Orn/put_carbamltrans"/>
</dbReference>
<dbReference type="InterPro" id="IPR024904">
    <property type="entry name" value="OTCase_ArgI"/>
</dbReference>
<dbReference type="NCBIfam" id="TIGR00658">
    <property type="entry name" value="orni_carb_tr"/>
    <property type="match status" value="1"/>
</dbReference>
<dbReference type="NCBIfam" id="NF001986">
    <property type="entry name" value="PRK00779.1"/>
    <property type="match status" value="1"/>
</dbReference>
<dbReference type="PANTHER" id="PTHR45753">
    <property type="entry name" value="ORNITHINE CARBAMOYLTRANSFERASE, MITOCHONDRIAL"/>
    <property type="match status" value="1"/>
</dbReference>
<dbReference type="PANTHER" id="PTHR45753:SF3">
    <property type="entry name" value="ORNITHINE TRANSCARBAMYLASE, MITOCHONDRIAL"/>
    <property type="match status" value="1"/>
</dbReference>
<dbReference type="Pfam" id="PF00185">
    <property type="entry name" value="OTCace"/>
    <property type="match status" value="1"/>
</dbReference>
<dbReference type="Pfam" id="PF02729">
    <property type="entry name" value="OTCace_N"/>
    <property type="match status" value="1"/>
</dbReference>
<dbReference type="PRINTS" id="PR00100">
    <property type="entry name" value="AOTCASE"/>
</dbReference>
<dbReference type="PRINTS" id="PR00102">
    <property type="entry name" value="OTCASE"/>
</dbReference>
<dbReference type="SUPFAM" id="SSF53671">
    <property type="entry name" value="Aspartate/ornithine carbamoyltransferase"/>
    <property type="match status" value="1"/>
</dbReference>
<dbReference type="PROSITE" id="PS00097">
    <property type="entry name" value="CARBAMOYLTRANSFERASE"/>
    <property type="match status" value="1"/>
</dbReference>
<gene>
    <name evidence="2" type="primary">arcB</name>
    <name type="ordered locus">BceJ2315_27050</name>
    <name type="ORF">BCAL2767</name>
</gene>
<organism>
    <name type="scientific">Burkholderia cenocepacia (strain ATCC BAA-245 / DSM 16553 / LMG 16656 / NCTC 13227 / J2315 / CF5610)</name>
    <name type="common">Burkholderia cepacia (strain J2315)</name>
    <dbReference type="NCBI Taxonomy" id="216591"/>
    <lineage>
        <taxon>Bacteria</taxon>
        <taxon>Pseudomonadati</taxon>
        <taxon>Pseudomonadota</taxon>
        <taxon>Betaproteobacteria</taxon>
        <taxon>Burkholderiales</taxon>
        <taxon>Burkholderiaceae</taxon>
        <taxon>Burkholderia</taxon>
        <taxon>Burkholderia cepacia complex</taxon>
    </lineage>
</organism>
<protein>
    <recommendedName>
        <fullName evidence="2">Ornithine carbamoyltransferase</fullName>
        <shortName evidence="2">OTCase</shortName>
        <ecNumber evidence="2">2.1.3.3</ecNumber>
    </recommendedName>
</protein>